<dbReference type="EC" id="1.11.1.7"/>
<dbReference type="GO" id="GO:0140825">
    <property type="term" value="F:lactoperoxidase activity"/>
    <property type="evidence" value="ECO:0007669"/>
    <property type="project" value="UniProtKB-EC"/>
</dbReference>
<dbReference type="GO" id="GO:0046872">
    <property type="term" value="F:metal ion binding"/>
    <property type="evidence" value="ECO:0007669"/>
    <property type="project" value="UniProtKB-KW"/>
</dbReference>
<dbReference type="GO" id="GO:0042744">
    <property type="term" value="P:hydrogen peroxide catabolic process"/>
    <property type="evidence" value="ECO:0007669"/>
    <property type="project" value="UniProtKB-KW"/>
</dbReference>
<keyword id="KW-0106">Calcium</keyword>
<keyword id="KW-0903">Direct protein sequencing</keyword>
<keyword id="KW-0349">Heme</keyword>
<keyword id="KW-0376">Hydrogen peroxide</keyword>
<keyword id="KW-0408">Iron</keyword>
<keyword id="KW-0479">Metal-binding</keyword>
<keyword id="KW-0560">Oxidoreductase</keyword>
<keyword id="KW-0575">Peroxidase</keyword>
<accession>P86062</accession>
<name>PER6_DAUCA</name>
<feature type="chain" id="PRO_0000355598" description="Peroxidase 6">
    <location>
        <begin position="1" status="less than"/>
        <end position="14" status="greater than"/>
    </location>
</feature>
<feature type="unsure residue" description="L or I">
    <location>
        <position position="1"/>
    </location>
</feature>
<feature type="unsure residue" description="L or I">
    <location>
        <position position="8"/>
    </location>
</feature>
<feature type="unsure residue" description="L or I">
    <location>
        <position position="11"/>
    </location>
</feature>
<feature type="non-terminal residue">
    <location>
        <position position="1"/>
    </location>
</feature>
<feature type="non-terminal residue">
    <location>
        <position position="14"/>
    </location>
</feature>
<sequence>LVSGCADLTALAAR</sequence>
<evidence type="ECO:0000250" key="1">
    <source>
        <dbReference type="UniProtKB" id="P84714"/>
    </source>
</evidence>
<evidence type="ECO:0000255" key="2">
    <source>
        <dbReference type="PROSITE-ProRule" id="PRU00297"/>
    </source>
</evidence>
<evidence type="ECO:0000305" key="3"/>
<organism>
    <name type="scientific">Daucus carota</name>
    <name type="common">Wild carrot</name>
    <dbReference type="NCBI Taxonomy" id="4039"/>
    <lineage>
        <taxon>Eukaryota</taxon>
        <taxon>Viridiplantae</taxon>
        <taxon>Streptophyta</taxon>
        <taxon>Embryophyta</taxon>
        <taxon>Tracheophyta</taxon>
        <taxon>Spermatophyta</taxon>
        <taxon>Magnoliopsida</taxon>
        <taxon>eudicotyledons</taxon>
        <taxon>Gunneridae</taxon>
        <taxon>Pentapetalae</taxon>
        <taxon>asterids</taxon>
        <taxon>campanulids</taxon>
        <taxon>Apiales</taxon>
        <taxon>Apiaceae</taxon>
        <taxon>Apioideae</taxon>
        <taxon>Scandiceae</taxon>
        <taxon>Daucinae</taxon>
        <taxon>Daucus</taxon>
        <taxon>Daucus sect. Daucus</taxon>
    </lineage>
</organism>
<reference evidence="3" key="1">
    <citation type="submission" date="2008-07" db="UniProtKB">
        <authorList>
            <person name="Almagro L."/>
            <person name="Ros Barcelo A."/>
            <person name="Pedreno M.A."/>
        </authorList>
    </citation>
    <scope>PROTEIN SEQUENCE</scope>
</reference>
<protein>
    <recommendedName>
        <fullName evidence="1">Peroxidase 6</fullName>
        <ecNumber>1.11.1.7</ecNumber>
    </recommendedName>
</protein>
<comment type="function">
    <text evidence="2">Removal of H(2)O(2), oxidation of toxic reductants, biosynthesis and degradation of lignin, suberization, auxin catabolism, response to environmental stresses such as wounding, pathogen attack and oxidative stress. These functions might be dependent on each isozyme/isoform in each plant tissue.</text>
</comment>
<comment type="catalytic activity">
    <reaction>
        <text>2 a phenolic donor + H2O2 = 2 a phenolic radical donor + 2 H2O</text>
        <dbReference type="Rhea" id="RHEA:56136"/>
        <dbReference type="ChEBI" id="CHEBI:15377"/>
        <dbReference type="ChEBI" id="CHEBI:16240"/>
        <dbReference type="ChEBI" id="CHEBI:139520"/>
        <dbReference type="ChEBI" id="CHEBI:139521"/>
        <dbReference type="EC" id="1.11.1.7"/>
    </reaction>
</comment>
<comment type="cofactor">
    <cofactor evidence="1 2">
        <name>Ca(2+)</name>
        <dbReference type="ChEBI" id="CHEBI:29108"/>
    </cofactor>
    <text evidence="1 2">Binds 2 calcium ions per subunit.</text>
</comment>
<comment type="cofactor">
    <cofactor evidence="1 2">
        <name>heme b</name>
        <dbReference type="ChEBI" id="CHEBI:60344"/>
    </cofactor>
    <text evidence="1 2">Binds 1 heme b (iron(II)-protoporphyrin IX) group per subunit.</text>
</comment>
<comment type="similarity">
    <text evidence="2">Belongs to the peroxidase family. Classical plant (class III) peroxidase subfamily.</text>
</comment>
<proteinExistence type="evidence at protein level"/>